<organism>
    <name type="scientific">Mycobacterium leprae (strain TN)</name>
    <dbReference type="NCBI Taxonomy" id="272631"/>
    <lineage>
        <taxon>Bacteria</taxon>
        <taxon>Bacillati</taxon>
        <taxon>Actinomycetota</taxon>
        <taxon>Actinomycetes</taxon>
        <taxon>Mycobacteriales</taxon>
        <taxon>Mycobacteriaceae</taxon>
        <taxon>Mycobacterium</taxon>
    </lineage>
</organism>
<feature type="chain" id="PRO_0000155684" description="Endonuclease NucS">
    <location>
        <begin position="1"/>
        <end position="220"/>
    </location>
</feature>
<accession>P53524</accession>
<accession>Q9CC77</accession>
<reference key="1">
    <citation type="submission" date="1994-09" db="EMBL/GenBank/DDBJ databases">
        <authorList>
            <person name="Smith D.R."/>
            <person name="Robison K."/>
        </authorList>
    </citation>
    <scope>NUCLEOTIDE SEQUENCE [GENOMIC DNA]</scope>
</reference>
<reference key="2">
    <citation type="journal article" date="2001" name="Nature">
        <title>Massive gene decay in the leprosy bacillus.</title>
        <authorList>
            <person name="Cole S.T."/>
            <person name="Eiglmeier K."/>
            <person name="Parkhill J."/>
            <person name="James K.D."/>
            <person name="Thomson N.R."/>
            <person name="Wheeler P.R."/>
            <person name="Honore N."/>
            <person name="Garnier T."/>
            <person name="Churcher C.M."/>
            <person name="Harris D.E."/>
            <person name="Mungall K.L."/>
            <person name="Basham D."/>
            <person name="Brown D."/>
            <person name="Chillingworth T."/>
            <person name="Connor R."/>
            <person name="Davies R.M."/>
            <person name="Devlin K."/>
            <person name="Duthoy S."/>
            <person name="Feltwell T."/>
            <person name="Fraser A."/>
            <person name="Hamlin N."/>
            <person name="Holroyd S."/>
            <person name="Hornsby T."/>
            <person name="Jagels K."/>
            <person name="Lacroix C."/>
            <person name="Maclean J."/>
            <person name="Moule S."/>
            <person name="Murphy L.D."/>
            <person name="Oliver K."/>
            <person name="Quail M.A."/>
            <person name="Rajandream M.A."/>
            <person name="Rutherford K.M."/>
            <person name="Rutter S."/>
            <person name="Seeger K."/>
            <person name="Simon S."/>
            <person name="Simmonds M."/>
            <person name="Skelton J."/>
            <person name="Squares R."/>
            <person name="Squares S."/>
            <person name="Stevens K."/>
            <person name="Taylor K."/>
            <person name="Whitehead S."/>
            <person name="Woodward J.R."/>
            <person name="Barrell B.G."/>
        </authorList>
    </citation>
    <scope>NUCLEOTIDE SEQUENCE [LARGE SCALE GENOMIC DNA]</scope>
    <source>
        <strain>TN</strain>
    </source>
</reference>
<proteinExistence type="inferred from homology"/>
<gene>
    <name evidence="1" type="primary">nucS</name>
    <name type="ordered locus">ML1155</name>
    <name type="ORF">B1549_C3_223</name>
</gene>
<dbReference type="EC" id="3.1.-.-" evidence="1"/>
<dbReference type="EMBL" id="U00014">
    <property type="protein sequence ID" value="AAA50894.1"/>
    <property type="status" value="ALT_FRAME"/>
    <property type="molecule type" value="Genomic_DNA"/>
</dbReference>
<dbReference type="EMBL" id="AL583921">
    <property type="protein sequence ID" value="CAC31536.1"/>
    <property type="molecule type" value="Genomic_DNA"/>
</dbReference>
<dbReference type="PIR" id="E87053">
    <property type="entry name" value="E87053"/>
</dbReference>
<dbReference type="PIR" id="S72806">
    <property type="entry name" value="S72806"/>
</dbReference>
<dbReference type="RefSeq" id="NP_301846.1">
    <property type="nucleotide sequence ID" value="NC_002677.1"/>
</dbReference>
<dbReference type="SMR" id="P53524"/>
<dbReference type="STRING" id="272631.gene:17574985"/>
<dbReference type="KEGG" id="mle:ML1155"/>
<dbReference type="PATRIC" id="fig|272631.5.peg.2086"/>
<dbReference type="Leproma" id="ML1155"/>
<dbReference type="eggNOG" id="COG1637">
    <property type="taxonomic scope" value="Bacteria"/>
</dbReference>
<dbReference type="HOGENOM" id="CLU_069350_0_0_11"/>
<dbReference type="OrthoDB" id="3344925at2"/>
<dbReference type="Proteomes" id="UP000000806">
    <property type="component" value="Chromosome"/>
</dbReference>
<dbReference type="GO" id="GO:0005737">
    <property type="term" value="C:cytoplasm"/>
    <property type="evidence" value="ECO:0007669"/>
    <property type="project" value="UniProtKB-SubCell"/>
</dbReference>
<dbReference type="GO" id="GO:0003677">
    <property type="term" value="F:DNA binding"/>
    <property type="evidence" value="ECO:0007669"/>
    <property type="project" value="UniProtKB-KW"/>
</dbReference>
<dbReference type="GO" id="GO:0000014">
    <property type="term" value="F:single-stranded DNA endodeoxyribonuclease activity"/>
    <property type="evidence" value="ECO:0007669"/>
    <property type="project" value="UniProtKB-UniRule"/>
</dbReference>
<dbReference type="CDD" id="cd22341">
    <property type="entry name" value="NucS-like"/>
    <property type="match status" value="1"/>
</dbReference>
<dbReference type="Gene3D" id="2.70.180.20">
    <property type="match status" value="1"/>
</dbReference>
<dbReference type="Gene3D" id="3.40.1350.10">
    <property type="match status" value="1"/>
</dbReference>
<dbReference type="HAMAP" id="MF_00722">
    <property type="entry name" value="NucS"/>
    <property type="match status" value="1"/>
</dbReference>
<dbReference type="InterPro" id="IPR002793">
    <property type="entry name" value="Endonuclease_NucS"/>
</dbReference>
<dbReference type="InterPro" id="IPR048301">
    <property type="entry name" value="NucS_C"/>
</dbReference>
<dbReference type="InterPro" id="IPR048302">
    <property type="entry name" value="NucS_N"/>
</dbReference>
<dbReference type="InterPro" id="IPR049173">
    <property type="entry name" value="NucS_N_sf"/>
</dbReference>
<dbReference type="InterPro" id="IPR011856">
    <property type="entry name" value="tRNA_endonuc-like_dom_sf"/>
</dbReference>
<dbReference type="NCBIfam" id="NF002876">
    <property type="entry name" value="PRK03298.1"/>
    <property type="match status" value="1"/>
</dbReference>
<dbReference type="PANTHER" id="PTHR38814">
    <property type="entry name" value="ENDONUCLEASE NUCS"/>
    <property type="match status" value="1"/>
</dbReference>
<dbReference type="PANTHER" id="PTHR38814:SF1">
    <property type="entry name" value="ENDONUCLEASE NUCS"/>
    <property type="match status" value="1"/>
</dbReference>
<dbReference type="Pfam" id="PF01939">
    <property type="entry name" value="NucS_C"/>
    <property type="match status" value="1"/>
</dbReference>
<dbReference type="Pfam" id="PF21003">
    <property type="entry name" value="NucS_N"/>
    <property type="match status" value="1"/>
</dbReference>
<keyword id="KW-0963">Cytoplasm</keyword>
<keyword id="KW-0238">DNA-binding</keyword>
<keyword id="KW-0255">Endonuclease</keyword>
<keyword id="KW-0378">Hydrolase</keyword>
<keyword id="KW-0540">Nuclease</keyword>
<keyword id="KW-1185">Reference proteome</keyword>
<protein>
    <recommendedName>
        <fullName evidence="1">Endonuclease NucS</fullName>
        <ecNumber evidence="1">3.1.-.-</ecNumber>
    </recommendedName>
</protein>
<name>NUCS_MYCLE</name>
<evidence type="ECO:0000255" key="1">
    <source>
        <dbReference type="HAMAP-Rule" id="MF_00722"/>
    </source>
</evidence>
<evidence type="ECO:0000305" key="2"/>
<sequence>MIAQCTVDYLGRLTAHLPSARRLLLFKADGSVSVHADDRAYKPLNWMSPPCWLTEDVAGASPAWVVENKAGEQLRITVEEVEHDSCHDLGVDPGLVKDGVEAHLQTLLAEQVQLLGEGYTLVRCEYMTAIGPVDLLCRDEQGGSVAVEIKRRGEIDGVEQLTRYLALLNRNSVLAPVRGVFAAQHIKPQARTLATDRGIRCVTLDYDKMRGMDSDEYRLF</sequence>
<comment type="function">
    <text evidence="1">Cleaves both 3' and 5' ssDNA extremities of branched DNA structures.</text>
</comment>
<comment type="subcellular location">
    <subcellularLocation>
        <location evidence="1">Cytoplasm</location>
    </subcellularLocation>
</comment>
<comment type="similarity">
    <text evidence="1">Belongs to the NucS endonuclease family.</text>
</comment>
<comment type="sequence caution" evidence="2">
    <conflict type="frameshift">
        <sequence resource="EMBL-CDS" id="AAA50894"/>
    </conflict>
</comment>